<dbReference type="EC" id="2.3.1.168" evidence="1"/>
<dbReference type="EMBL" id="L42996">
    <property type="protein sequence ID" value="AAC37681.1"/>
    <property type="molecule type" value="mRNA"/>
</dbReference>
<dbReference type="EMBL" id="AK165959">
    <property type="protein sequence ID" value="BAE38487.1"/>
    <property type="molecule type" value="mRNA"/>
</dbReference>
<dbReference type="EMBL" id="CH466532">
    <property type="protein sequence ID" value="EDL12381.1"/>
    <property type="molecule type" value="Genomic_DNA"/>
</dbReference>
<dbReference type="CCDS" id="CCDS17787.1"/>
<dbReference type="PIR" id="S65760">
    <property type="entry name" value="S65760"/>
</dbReference>
<dbReference type="RefSeq" id="NP_034152.2">
    <property type="nucleotide sequence ID" value="NM_010022.5"/>
</dbReference>
<dbReference type="SMR" id="P53395"/>
<dbReference type="BioGRID" id="199061">
    <property type="interactions" value="25"/>
</dbReference>
<dbReference type="FunCoup" id="P53395">
    <property type="interactions" value="2921"/>
</dbReference>
<dbReference type="IntAct" id="P53395">
    <property type="interactions" value="6"/>
</dbReference>
<dbReference type="MINT" id="P53395"/>
<dbReference type="STRING" id="10090.ENSMUSP00000000349"/>
<dbReference type="GlyGen" id="P53395">
    <property type="glycosylation" value="1 site, 1 O-linked glycan (1 site)"/>
</dbReference>
<dbReference type="iPTMnet" id="P53395"/>
<dbReference type="PhosphoSitePlus" id="P53395"/>
<dbReference type="SwissPalm" id="P53395"/>
<dbReference type="jPOST" id="P53395"/>
<dbReference type="PaxDb" id="10090-ENSMUSP00000000349"/>
<dbReference type="PeptideAtlas" id="P53395"/>
<dbReference type="ProteomicsDB" id="293918"/>
<dbReference type="Pumba" id="P53395"/>
<dbReference type="Antibodypedia" id="19986">
    <property type="antibodies" value="189 antibodies from 25 providers"/>
</dbReference>
<dbReference type="DNASU" id="13171"/>
<dbReference type="Ensembl" id="ENSMUST00000000349.11">
    <property type="protein sequence ID" value="ENSMUSP00000000349.7"/>
    <property type="gene ID" value="ENSMUSG00000000340.11"/>
</dbReference>
<dbReference type="GeneID" id="13171"/>
<dbReference type="KEGG" id="mmu:13171"/>
<dbReference type="UCSC" id="uc008rcg.2">
    <property type="organism name" value="mouse"/>
</dbReference>
<dbReference type="AGR" id="MGI:105386"/>
<dbReference type="CTD" id="1629"/>
<dbReference type="MGI" id="MGI:105386">
    <property type="gene designation" value="Dbt"/>
</dbReference>
<dbReference type="VEuPathDB" id="HostDB:ENSMUSG00000000340"/>
<dbReference type="eggNOG" id="KOG0558">
    <property type="taxonomic scope" value="Eukaryota"/>
</dbReference>
<dbReference type="GeneTree" id="ENSGT00940000156750"/>
<dbReference type="HOGENOM" id="CLU_016733_10_0_1"/>
<dbReference type="InParanoid" id="P53395"/>
<dbReference type="OMA" id="MPFCIKA"/>
<dbReference type="OrthoDB" id="202158at2759"/>
<dbReference type="PhylomeDB" id="P53395"/>
<dbReference type="TreeFam" id="TF314182"/>
<dbReference type="Reactome" id="R-MMU-70895">
    <property type="pathway name" value="Branched-chain amino acid catabolism"/>
</dbReference>
<dbReference type="Reactome" id="R-MMU-9013407">
    <property type="pathway name" value="RHOH GTPase cycle"/>
</dbReference>
<dbReference type="Reactome" id="R-MMU-9837999">
    <property type="pathway name" value="Mitochondrial protein degradation"/>
</dbReference>
<dbReference type="Reactome" id="R-MMU-9857492">
    <property type="pathway name" value="Protein lipoylation"/>
</dbReference>
<dbReference type="Reactome" id="R-MMU-9859138">
    <property type="pathway name" value="BCKDH synthesizes BCAA-CoA from KIC, KMVA, KIV"/>
</dbReference>
<dbReference type="BioGRID-ORCS" id="13171">
    <property type="hits" value="3 hits in 79 CRISPR screens"/>
</dbReference>
<dbReference type="ChiTaRS" id="Dbt">
    <property type="organism name" value="mouse"/>
</dbReference>
<dbReference type="PRO" id="PR:P53395"/>
<dbReference type="Proteomes" id="UP000000589">
    <property type="component" value="Chromosome 3"/>
</dbReference>
<dbReference type="RNAct" id="P53395">
    <property type="molecule type" value="protein"/>
</dbReference>
<dbReference type="Bgee" id="ENSMUSG00000000340">
    <property type="expression patterns" value="Expressed in brown adipose tissue and 264 other cell types or tissues"/>
</dbReference>
<dbReference type="ExpressionAtlas" id="P53395">
    <property type="expression patterns" value="baseline and differential"/>
</dbReference>
<dbReference type="GO" id="GO:0160157">
    <property type="term" value="C:branched-chain alpha-ketoacid dehydrogenase complex"/>
    <property type="evidence" value="ECO:0007669"/>
    <property type="project" value="Ensembl"/>
</dbReference>
<dbReference type="GO" id="GO:0005829">
    <property type="term" value="C:cytosol"/>
    <property type="evidence" value="ECO:0007669"/>
    <property type="project" value="Ensembl"/>
</dbReference>
<dbReference type="GO" id="GO:0015630">
    <property type="term" value="C:microtubule cytoskeleton"/>
    <property type="evidence" value="ECO:0007669"/>
    <property type="project" value="Ensembl"/>
</dbReference>
<dbReference type="GO" id="GO:0042645">
    <property type="term" value="C:mitochondrial nucleoid"/>
    <property type="evidence" value="ECO:0007669"/>
    <property type="project" value="Ensembl"/>
</dbReference>
<dbReference type="GO" id="GO:0005739">
    <property type="term" value="C:mitochondrion"/>
    <property type="evidence" value="ECO:0007005"/>
    <property type="project" value="MGI"/>
</dbReference>
<dbReference type="GO" id="GO:0047101">
    <property type="term" value="F:branched-chain alpha-keto acid dehydrogenase activity"/>
    <property type="evidence" value="ECO:0007669"/>
    <property type="project" value="Ensembl"/>
</dbReference>
<dbReference type="GO" id="GO:0043754">
    <property type="term" value="F:dihydrolipoyllysine-residue (2-methylpropanoyl)transferase activity"/>
    <property type="evidence" value="ECO:0007669"/>
    <property type="project" value="UniProtKB-EC"/>
</dbReference>
<dbReference type="GO" id="GO:0031625">
    <property type="term" value="F:ubiquitin protein ligase binding"/>
    <property type="evidence" value="ECO:0007669"/>
    <property type="project" value="Ensembl"/>
</dbReference>
<dbReference type="GO" id="GO:0009083">
    <property type="term" value="P:branched-chain amino acid catabolic process"/>
    <property type="evidence" value="ECO:0007669"/>
    <property type="project" value="Ensembl"/>
</dbReference>
<dbReference type="CDD" id="cd06849">
    <property type="entry name" value="lipoyl_domain"/>
    <property type="match status" value="1"/>
</dbReference>
<dbReference type="FunFam" id="2.40.50.100:FF:000013">
    <property type="entry name" value="Dihydrolipoamide acetyltransferase component of pyruvate dehydrogenase complex"/>
    <property type="match status" value="1"/>
</dbReference>
<dbReference type="FunFam" id="3.30.559.10:FF:000009">
    <property type="entry name" value="Dihydrolipoamide acetyltransferase component of pyruvate dehydrogenase complex"/>
    <property type="match status" value="1"/>
</dbReference>
<dbReference type="FunFam" id="4.10.320.10:FF:000002">
    <property type="entry name" value="Dihydrolipoamide acetyltransferase component of pyruvate dehydrogenase complex"/>
    <property type="match status" value="1"/>
</dbReference>
<dbReference type="Gene3D" id="2.40.50.100">
    <property type="match status" value="1"/>
</dbReference>
<dbReference type="Gene3D" id="3.30.559.10">
    <property type="entry name" value="Chloramphenicol acetyltransferase-like domain"/>
    <property type="match status" value="1"/>
</dbReference>
<dbReference type="Gene3D" id="4.10.320.10">
    <property type="entry name" value="E3-binding domain"/>
    <property type="match status" value="1"/>
</dbReference>
<dbReference type="InterPro" id="IPR003016">
    <property type="entry name" value="2-oxoA_DH_lipoyl-BS"/>
</dbReference>
<dbReference type="InterPro" id="IPR001078">
    <property type="entry name" value="2-oxoacid_DH_actylTfrase"/>
</dbReference>
<dbReference type="InterPro" id="IPR050743">
    <property type="entry name" value="2-oxoacid_DH_E2_comp"/>
</dbReference>
<dbReference type="InterPro" id="IPR000089">
    <property type="entry name" value="Biotin_lipoyl"/>
</dbReference>
<dbReference type="InterPro" id="IPR023213">
    <property type="entry name" value="CAT-like_dom_sf"/>
</dbReference>
<dbReference type="InterPro" id="IPR036625">
    <property type="entry name" value="E3-bd_dom_sf"/>
</dbReference>
<dbReference type="InterPro" id="IPR004167">
    <property type="entry name" value="PSBD"/>
</dbReference>
<dbReference type="InterPro" id="IPR011053">
    <property type="entry name" value="Single_hybrid_motif"/>
</dbReference>
<dbReference type="PANTHER" id="PTHR43178">
    <property type="entry name" value="DIHYDROLIPOAMIDE ACETYLTRANSFERASE COMPONENT OF PYRUVATE DEHYDROGENASE COMPLEX"/>
    <property type="match status" value="1"/>
</dbReference>
<dbReference type="PANTHER" id="PTHR43178:SF5">
    <property type="entry name" value="LIPOAMIDE ACYLTRANSFERASE COMPONENT OF BRANCHED-CHAIN ALPHA-KETO ACID DEHYDROGENASE COMPLEX, MITOCHONDRIAL"/>
    <property type="match status" value="1"/>
</dbReference>
<dbReference type="Pfam" id="PF00198">
    <property type="entry name" value="2-oxoacid_dh"/>
    <property type="match status" value="1"/>
</dbReference>
<dbReference type="Pfam" id="PF00364">
    <property type="entry name" value="Biotin_lipoyl"/>
    <property type="match status" value="1"/>
</dbReference>
<dbReference type="Pfam" id="PF02817">
    <property type="entry name" value="E3_binding"/>
    <property type="match status" value="1"/>
</dbReference>
<dbReference type="SUPFAM" id="SSF52777">
    <property type="entry name" value="CoA-dependent acyltransferases"/>
    <property type="match status" value="1"/>
</dbReference>
<dbReference type="SUPFAM" id="SSF47005">
    <property type="entry name" value="Peripheral subunit-binding domain of 2-oxo acid dehydrogenase complex"/>
    <property type="match status" value="1"/>
</dbReference>
<dbReference type="SUPFAM" id="SSF51230">
    <property type="entry name" value="Single hybrid motif"/>
    <property type="match status" value="1"/>
</dbReference>
<dbReference type="PROSITE" id="PS50968">
    <property type="entry name" value="BIOTINYL_LIPOYL"/>
    <property type="match status" value="1"/>
</dbReference>
<dbReference type="PROSITE" id="PS00189">
    <property type="entry name" value="LIPOYL"/>
    <property type="match status" value="1"/>
</dbReference>
<dbReference type="PROSITE" id="PS51826">
    <property type="entry name" value="PSBD"/>
    <property type="match status" value="1"/>
</dbReference>
<sequence>MAAARVLRTWSQNAVRLTCVRYFQTFNSARVLKPKCVCSVGYPLFKYSQPRHSLRTAAVLQGQVVQFKLSDIGEGIREVTIKEWYVKEGDTVSQFDSICEVQSDKASVTITSRYDGVIKRLYYNLDDIAYVGKPLIDIETEALKDSEEDVVETPAVSHDEHTHQEIKGQKTLATPAVRRLAMENNIKLSEVVGSGKDGRILKEDILSFLEKQTGAILPPSPKSEITPPPPQPKDRTFPTPIAKPPVFTGKDRTEPVTGFQKAMVKTMSAALKIPHFGYCDEIDLTQLVKLREELKPVALARGIKLSFMPFFLKAASLGLLQFPILNASVDENCQNITYKASHNIGIAMDTELGLIVPNVKNVQVRSVFEIAMELNRLQKLGSSGQLGTTDLTGGTFTLSNIGSIGGTYAKPVILPPEVAIGALGAIKALPRFDQKGDVYKAQIMNVSWSADHRVIDGATMSRFSNLWKSYLENPAFMLLDLK</sequence>
<name>ODB2_MOUSE</name>
<gene>
    <name type="primary">Dbt</name>
</gene>
<protein>
    <recommendedName>
        <fullName evidence="8">Lipoamide acyltransferase component of branched-chain alpha-keto acid dehydrogenase complex, mitochondrial</fullName>
        <ecNumber evidence="1">2.3.1.168</ecNumber>
    </recommendedName>
    <alternativeName>
        <fullName>Branched-chain alpha-keto acid dehydrogenase complex component E2</fullName>
        <shortName>BCKAD-E2</shortName>
        <shortName>BCKADE2</shortName>
    </alternativeName>
    <alternativeName>
        <fullName>Dihydrolipoamide acetyltransferase component of branched-chain alpha-keto acid dehydrogenase complex</fullName>
    </alternativeName>
    <alternativeName>
        <fullName>Dihydrolipoamide branched chain transacylase</fullName>
    </alternativeName>
    <alternativeName>
        <fullName>Dihydrolipoyllysine-residue (2-methylpropanoyl)transferase</fullName>
    </alternativeName>
</protein>
<keyword id="KW-0007">Acetylation</keyword>
<keyword id="KW-0012">Acyltransferase</keyword>
<keyword id="KW-0450">Lipoyl</keyword>
<keyword id="KW-0496">Mitochondrion</keyword>
<keyword id="KW-0597">Phosphoprotein</keyword>
<keyword id="KW-1185">Reference proteome</keyword>
<keyword id="KW-0808">Transferase</keyword>
<keyword id="KW-0809">Transit peptide</keyword>
<accession>P53395</accession>
<accession>Q3TMF5</accession>
<proteinExistence type="evidence at protein level"/>
<organism>
    <name type="scientific">Mus musculus</name>
    <name type="common">Mouse</name>
    <dbReference type="NCBI Taxonomy" id="10090"/>
    <lineage>
        <taxon>Eukaryota</taxon>
        <taxon>Metazoa</taxon>
        <taxon>Chordata</taxon>
        <taxon>Craniata</taxon>
        <taxon>Vertebrata</taxon>
        <taxon>Euteleostomi</taxon>
        <taxon>Mammalia</taxon>
        <taxon>Eutheria</taxon>
        <taxon>Euarchontoglires</taxon>
        <taxon>Glires</taxon>
        <taxon>Rodentia</taxon>
        <taxon>Myomorpha</taxon>
        <taxon>Muroidea</taxon>
        <taxon>Muridae</taxon>
        <taxon>Murinae</taxon>
        <taxon>Mus</taxon>
        <taxon>Mus</taxon>
    </lineage>
</organism>
<comment type="function">
    <text evidence="1">The branched-chain alpha-keto dehydrogenase complex catalyzes the overall conversion of alpha-keto acids to acyl-CoA and CO(2). It contains multiple copies of three enzymatic components: branched-chain alpha-keto acid decarboxylase (E1), lipoamide acyltransferase (E2) and lipoamide dehydrogenase (E3). Within this complex, the catalytic function of this enzyme is to accept, and to transfer to coenzyme A, acyl groups that are generated by the branched-chain alpha-keto acid decarboxylase component.</text>
</comment>
<comment type="catalytic activity">
    <reaction evidence="1">
        <text>N(6)-[(R)-dihydrolipoyl]-L-lysyl-[protein] + 2-methylpropanoyl-CoA = N(6)-[(R)-S(8)-2-methylpropanoyldihydrolipoyl]-L-lysyl-[protein] + CoA</text>
        <dbReference type="Rhea" id="RHEA:18865"/>
        <dbReference type="Rhea" id="RHEA-COMP:10475"/>
        <dbReference type="Rhea" id="RHEA-COMP:10497"/>
        <dbReference type="ChEBI" id="CHEBI:57287"/>
        <dbReference type="ChEBI" id="CHEBI:57338"/>
        <dbReference type="ChEBI" id="CHEBI:83100"/>
        <dbReference type="ChEBI" id="CHEBI:83142"/>
        <dbReference type="EC" id="2.3.1.168"/>
    </reaction>
    <physiologicalReaction direction="left-to-right" evidence="1">
        <dbReference type="Rhea" id="RHEA:18866"/>
    </physiologicalReaction>
</comment>
<comment type="cofactor">
    <cofactor evidence="1">
        <name>(R)-lipoate</name>
        <dbReference type="ChEBI" id="CHEBI:83088"/>
    </cofactor>
    <text evidence="1">Binds 1 lipoyl cofactor covalently.</text>
</comment>
<comment type="subunit">
    <text evidence="2 3">Forms a 24-polypeptide structural core with octahedral symmetry that represents the E2 component of the branched-chain alpha-ketoacid dehydrogenase (BCKDH) complex. The BCKDH complex is composed of three major building blocks E1, E2 and E3. It is organized around E2, a 24-meric cubic core composed of DBT, to which are associated 6 to 12 copies of E1, and approximately 6 copies of the dehydrogenase E3, a DLD dimer (By similarity). Interacts with PPM1K with a 24:1 stoichiometry; the N-terminal region (residues 49-61) of PPM1K and C-terminal linker of the lipoyl domain of DBT/E2 (residues 145-160) are critical for this interaction whereas the lipoyl prosthetic group is dispensable. This interaction requires colocalization in mitochondria (By similarity). PPM1K competes with BCKDK for binding to DBT; this interaction is modulated by branched-chain alpha-keto acids (BCKAs). At steady state, BCKDH holoenzyme preferentially binds BCKDK and BCKDHA is phosphorylated. In response to high levels of BCKAs, BCKDK is replaced by PPM1K leading to BCKDHA dephosphorylation (By similarity).</text>
</comment>
<comment type="subcellular location">
    <subcellularLocation>
        <location evidence="1">Mitochondrion matrix</location>
    </subcellularLocation>
</comment>
<comment type="similarity">
    <text evidence="8">Belongs to the 2-oxoacid dehydrogenase family.</text>
</comment>
<reference key="1">
    <citation type="journal article" date="1996" name="Biochim. Biophys. Acta">
        <title>Molecular cloning of the murine branched chain alpha-ketoacid dehydrogenase E2 subunit: presence of 3' B1 repeat elements.</title>
        <authorList>
            <person name="Costeas P.A."/>
            <person name="Tonelli L.A."/>
            <person name="Chinsky J.M."/>
        </authorList>
    </citation>
    <scope>NUCLEOTIDE SEQUENCE [MRNA]</scope>
    <source>
        <tissue>Liver</tissue>
    </source>
</reference>
<reference key="2">
    <citation type="journal article" date="2005" name="Science">
        <title>The transcriptional landscape of the mammalian genome.</title>
        <authorList>
            <person name="Carninci P."/>
            <person name="Kasukawa T."/>
            <person name="Katayama S."/>
            <person name="Gough J."/>
            <person name="Frith M.C."/>
            <person name="Maeda N."/>
            <person name="Oyama R."/>
            <person name="Ravasi T."/>
            <person name="Lenhard B."/>
            <person name="Wells C."/>
            <person name="Kodzius R."/>
            <person name="Shimokawa K."/>
            <person name="Bajic V.B."/>
            <person name="Brenner S.E."/>
            <person name="Batalov S."/>
            <person name="Forrest A.R."/>
            <person name="Zavolan M."/>
            <person name="Davis M.J."/>
            <person name="Wilming L.G."/>
            <person name="Aidinis V."/>
            <person name="Allen J.E."/>
            <person name="Ambesi-Impiombato A."/>
            <person name="Apweiler R."/>
            <person name="Aturaliya R.N."/>
            <person name="Bailey T.L."/>
            <person name="Bansal M."/>
            <person name="Baxter L."/>
            <person name="Beisel K.W."/>
            <person name="Bersano T."/>
            <person name="Bono H."/>
            <person name="Chalk A.M."/>
            <person name="Chiu K.P."/>
            <person name="Choudhary V."/>
            <person name="Christoffels A."/>
            <person name="Clutterbuck D.R."/>
            <person name="Crowe M.L."/>
            <person name="Dalla E."/>
            <person name="Dalrymple B.P."/>
            <person name="de Bono B."/>
            <person name="Della Gatta G."/>
            <person name="di Bernardo D."/>
            <person name="Down T."/>
            <person name="Engstrom P."/>
            <person name="Fagiolini M."/>
            <person name="Faulkner G."/>
            <person name="Fletcher C.F."/>
            <person name="Fukushima T."/>
            <person name="Furuno M."/>
            <person name="Futaki S."/>
            <person name="Gariboldi M."/>
            <person name="Georgii-Hemming P."/>
            <person name="Gingeras T.R."/>
            <person name="Gojobori T."/>
            <person name="Green R.E."/>
            <person name="Gustincich S."/>
            <person name="Harbers M."/>
            <person name="Hayashi Y."/>
            <person name="Hensch T.K."/>
            <person name="Hirokawa N."/>
            <person name="Hill D."/>
            <person name="Huminiecki L."/>
            <person name="Iacono M."/>
            <person name="Ikeo K."/>
            <person name="Iwama A."/>
            <person name="Ishikawa T."/>
            <person name="Jakt M."/>
            <person name="Kanapin A."/>
            <person name="Katoh M."/>
            <person name="Kawasawa Y."/>
            <person name="Kelso J."/>
            <person name="Kitamura H."/>
            <person name="Kitano H."/>
            <person name="Kollias G."/>
            <person name="Krishnan S.P."/>
            <person name="Kruger A."/>
            <person name="Kummerfeld S.K."/>
            <person name="Kurochkin I.V."/>
            <person name="Lareau L.F."/>
            <person name="Lazarevic D."/>
            <person name="Lipovich L."/>
            <person name="Liu J."/>
            <person name="Liuni S."/>
            <person name="McWilliam S."/>
            <person name="Madan Babu M."/>
            <person name="Madera M."/>
            <person name="Marchionni L."/>
            <person name="Matsuda H."/>
            <person name="Matsuzawa S."/>
            <person name="Miki H."/>
            <person name="Mignone F."/>
            <person name="Miyake S."/>
            <person name="Morris K."/>
            <person name="Mottagui-Tabar S."/>
            <person name="Mulder N."/>
            <person name="Nakano N."/>
            <person name="Nakauchi H."/>
            <person name="Ng P."/>
            <person name="Nilsson R."/>
            <person name="Nishiguchi S."/>
            <person name="Nishikawa S."/>
            <person name="Nori F."/>
            <person name="Ohara O."/>
            <person name="Okazaki Y."/>
            <person name="Orlando V."/>
            <person name="Pang K.C."/>
            <person name="Pavan W.J."/>
            <person name="Pavesi G."/>
            <person name="Pesole G."/>
            <person name="Petrovsky N."/>
            <person name="Piazza S."/>
            <person name="Reed J."/>
            <person name="Reid J.F."/>
            <person name="Ring B.Z."/>
            <person name="Ringwald M."/>
            <person name="Rost B."/>
            <person name="Ruan Y."/>
            <person name="Salzberg S.L."/>
            <person name="Sandelin A."/>
            <person name="Schneider C."/>
            <person name="Schoenbach C."/>
            <person name="Sekiguchi K."/>
            <person name="Semple C.A."/>
            <person name="Seno S."/>
            <person name="Sessa L."/>
            <person name="Sheng Y."/>
            <person name="Shibata Y."/>
            <person name="Shimada H."/>
            <person name="Shimada K."/>
            <person name="Silva D."/>
            <person name="Sinclair B."/>
            <person name="Sperling S."/>
            <person name="Stupka E."/>
            <person name="Sugiura K."/>
            <person name="Sultana R."/>
            <person name="Takenaka Y."/>
            <person name="Taki K."/>
            <person name="Tammoja K."/>
            <person name="Tan S.L."/>
            <person name="Tang S."/>
            <person name="Taylor M.S."/>
            <person name="Tegner J."/>
            <person name="Teichmann S.A."/>
            <person name="Ueda H.R."/>
            <person name="van Nimwegen E."/>
            <person name="Verardo R."/>
            <person name="Wei C.L."/>
            <person name="Yagi K."/>
            <person name="Yamanishi H."/>
            <person name="Zabarovsky E."/>
            <person name="Zhu S."/>
            <person name="Zimmer A."/>
            <person name="Hide W."/>
            <person name="Bult C."/>
            <person name="Grimmond S.M."/>
            <person name="Teasdale R.D."/>
            <person name="Liu E.T."/>
            <person name="Brusic V."/>
            <person name="Quackenbush J."/>
            <person name="Wahlestedt C."/>
            <person name="Mattick J.S."/>
            <person name="Hume D.A."/>
            <person name="Kai C."/>
            <person name="Sasaki D."/>
            <person name="Tomaru Y."/>
            <person name="Fukuda S."/>
            <person name="Kanamori-Katayama M."/>
            <person name="Suzuki M."/>
            <person name="Aoki J."/>
            <person name="Arakawa T."/>
            <person name="Iida J."/>
            <person name="Imamura K."/>
            <person name="Itoh M."/>
            <person name="Kato T."/>
            <person name="Kawaji H."/>
            <person name="Kawagashira N."/>
            <person name="Kawashima T."/>
            <person name="Kojima M."/>
            <person name="Kondo S."/>
            <person name="Konno H."/>
            <person name="Nakano K."/>
            <person name="Ninomiya N."/>
            <person name="Nishio T."/>
            <person name="Okada M."/>
            <person name="Plessy C."/>
            <person name="Shibata K."/>
            <person name="Shiraki T."/>
            <person name="Suzuki S."/>
            <person name="Tagami M."/>
            <person name="Waki K."/>
            <person name="Watahiki A."/>
            <person name="Okamura-Oho Y."/>
            <person name="Suzuki H."/>
            <person name="Kawai J."/>
            <person name="Hayashizaki Y."/>
        </authorList>
    </citation>
    <scope>NUCLEOTIDE SEQUENCE [LARGE SCALE MRNA]</scope>
    <source>
        <tissue>Lung</tissue>
    </source>
</reference>
<reference key="3">
    <citation type="submission" date="2005-07" db="EMBL/GenBank/DDBJ databases">
        <authorList>
            <person name="Mural R.J."/>
            <person name="Adams M.D."/>
            <person name="Myers E.W."/>
            <person name="Smith H.O."/>
            <person name="Venter J.C."/>
        </authorList>
    </citation>
    <scope>NUCLEOTIDE SEQUENCE [LARGE SCALE GENOMIC DNA]</scope>
</reference>
<reference key="4">
    <citation type="journal article" date="2010" name="Cell">
        <title>A tissue-specific atlas of mouse protein phosphorylation and expression.</title>
        <authorList>
            <person name="Huttlin E.L."/>
            <person name="Jedrychowski M.P."/>
            <person name="Elias J.E."/>
            <person name="Goswami T."/>
            <person name="Rad R."/>
            <person name="Beausoleil S.A."/>
            <person name="Villen J."/>
            <person name="Haas W."/>
            <person name="Sowa M.E."/>
            <person name="Gygi S.P."/>
        </authorList>
    </citation>
    <scope>IDENTIFICATION BY MASS SPECTROMETRY [LARGE SCALE ANALYSIS]</scope>
    <source>
        <tissue>Brain</tissue>
        <tissue>Brown adipose tissue</tissue>
        <tissue>Heart</tissue>
        <tissue>Kidney</tissue>
        <tissue>Liver</tissue>
        <tissue>Lung</tissue>
        <tissue>Pancreas</tissue>
        <tissue>Spleen</tissue>
        <tissue>Testis</tissue>
    </source>
</reference>
<reference key="5">
    <citation type="journal article" date="2013" name="Mol. Cell">
        <title>SIRT5-mediated lysine desuccinylation impacts diverse metabolic pathways.</title>
        <authorList>
            <person name="Park J."/>
            <person name="Chen Y."/>
            <person name="Tishkoff D.X."/>
            <person name="Peng C."/>
            <person name="Tan M."/>
            <person name="Dai L."/>
            <person name="Xie Z."/>
            <person name="Zhang Y."/>
            <person name="Zwaans B.M."/>
            <person name="Skinner M.E."/>
            <person name="Lombard D.B."/>
            <person name="Zhao Y."/>
        </authorList>
    </citation>
    <scope>SUCCINYLATION [LARGE SCALE ANALYSIS] AT LYS-133; LYS-196; LYS-261; LYS-289 AND LYS-440</scope>
    <scope>IDENTIFICATION BY MASS SPECTROMETRY [LARGE SCALE ANALYSIS]</scope>
    <source>
        <tissue>Liver</tissue>
    </source>
</reference>
<reference key="6">
    <citation type="journal article" date="2013" name="Proc. Natl. Acad. Sci. U.S.A.">
        <title>Label-free quantitative proteomics of the lysine acetylome in mitochondria identifies substrates of SIRT3 in metabolic pathways.</title>
        <authorList>
            <person name="Rardin M.J."/>
            <person name="Newman J.C."/>
            <person name="Held J.M."/>
            <person name="Cusack M.P."/>
            <person name="Sorensen D.J."/>
            <person name="Li B."/>
            <person name="Schilling B."/>
            <person name="Mooney S.D."/>
            <person name="Kahn C.R."/>
            <person name="Verdin E."/>
            <person name="Gibson B.W."/>
        </authorList>
    </citation>
    <scope>ACETYLATION [LARGE SCALE ANALYSIS] AT LYS-196; LYS-202; LYS-243; LYS-250; LYS-289; LYS-295; LYS-304; LYS-435 AND LYS-440</scope>
    <scope>IDENTIFICATION BY MASS SPECTROMETRY [LARGE SCALE ANALYSIS]</scope>
    <source>
        <tissue>Liver</tissue>
    </source>
</reference>
<evidence type="ECO:0000250" key="1">
    <source>
        <dbReference type="UniProtKB" id="P11181"/>
    </source>
</evidence>
<evidence type="ECO:0000250" key="2">
    <source>
        <dbReference type="UniProtKB" id="P11182"/>
    </source>
</evidence>
<evidence type="ECO:0000250" key="3">
    <source>
        <dbReference type="UniProtKB" id="P12694"/>
    </source>
</evidence>
<evidence type="ECO:0000255" key="4"/>
<evidence type="ECO:0000255" key="5">
    <source>
        <dbReference type="PROSITE-ProRule" id="PRU01066"/>
    </source>
</evidence>
<evidence type="ECO:0000255" key="6">
    <source>
        <dbReference type="PROSITE-ProRule" id="PRU01170"/>
    </source>
</evidence>
<evidence type="ECO:0000256" key="7">
    <source>
        <dbReference type="SAM" id="MobiDB-lite"/>
    </source>
</evidence>
<evidence type="ECO:0000305" key="8"/>
<evidence type="ECO:0007744" key="9">
    <source>
    </source>
</evidence>
<evidence type="ECO:0007744" key="10">
    <source>
    </source>
</evidence>
<feature type="transit peptide" description="Mitochondrion" evidence="4">
    <location>
        <begin position="1"/>
        <end position="61"/>
    </location>
</feature>
<feature type="chain" id="PRO_0000020490" description="Lipoamide acyltransferase component of branched-chain alpha-keto acid dehydrogenase complex, mitochondrial">
    <location>
        <begin position="62"/>
        <end position="482"/>
    </location>
</feature>
<feature type="domain" description="Lipoyl-binding" evidence="5">
    <location>
        <begin position="64"/>
        <end position="139"/>
    </location>
</feature>
<feature type="domain" description="Peripheral subunit-binding (PSBD)" evidence="6">
    <location>
        <begin position="172"/>
        <end position="209"/>
    </location>
</feature>
<feature type="region of interest" description="Critical for association with PPM1K" evidence="2">
    <location>
        <begin position="145"/>
        <end position="160"/>
    </location>
</feature>
<feature type="region of interest" description="Disordered" evidence="7">
    <location>
        <begin position="217"/>
        <end position="252"/>
    </location>
</feature>
<feature type="compositionally biased region" description="Pro residues" evidence="7">
    <location>
        <begin position="218"/>
        <end position="231"/>
    </location>
</feature>
<feature type="active site" evidence="4">
    <location>
        <position position="452"/>
    </location>
</feature>
<feature type="active site" evidence="4">
    <location>
        <position position="456"/>
    </location>
</feature>
<feature type="binding site" evidence="1">
    <location>
        <position position="291"/>
    </location>
    <ligand>
        <name>CoA</name>
        <dbReference type="ChEBI" id="CHEBI:57287"/>
    </ligand>
</feature>
<feature type="binding site" evidence="1">
    <location>
        <position position="306"/>
    </location>
    <ligand>
        <name>CoA</name>
        <dbReference type="ChEBI" id="CHEBI:57287"/>
    </ligand>
</feature>
<feature type="binding site" evidence="1">
    <location>
        <position position="349"/>
    </location>
    <ligand>
        <name>CoA</name>
        <dbReference type="ChEBI" id="CHEBI:57287"/>
    </ligand>
</feature>
<feature type="binding site" evidence="1">
    <location>
        <position position="378"/>
    </location>
    <ligand>
        <name>CoA</name>
        <dbReference type="ChEBI" id="CHEBI:57287"/>
    </ligand>
</feature>
<feature type="binding site" evidence="1">
    <location>
        <position position="399"/>
    </location>
    <ligand>
        <name>CoA</name>
        <dbReference type="ChEBI" id="CHEBI:57287"/>
    </ligand>
</feature>
<feature type="binding site" evidence="1">
    <location>
        <position position="400"/>
    </location>
    <ligand>
        <name>CoA</name>
        <dbReference type="ChEBI" id="CHEBI:57287"/>
    </ligand>
</feature>
<feature type="binding site" evidence="1">
    <location>
        <position position="403"/>
    </location>
    <ligand>
        <name>CoA</name>
        <dbReference type="ChEBI" id="CHEBI:57287"/>
    </ligand>
</feature>
<feature type="binding site" evidence="1">
    <location>
        <position position="424"/>
    </location>
    <ligand>
        <name>CoA</name>
        <dbReference type="ChEBI" id="CHEBI:57287"/>
    </ligand>
</feature>
<feature type="binding site" evidence="1">
    <location>
        <position position="426"/>
    </location>
    <ligand>
        <name>CoA</name>
        <dbReference type="ChEBI" id="CHEBI:57287"/>
    </ligand>
</feature>
<feature type="modified residue" description="N6-lipoyllysine" evidence="1 5">
    <location>
        <position position="105"/>
    </location>
</feature>
<feature type="modified residue" description="N6-succinyllysine" evidence="10">
    <location>
        <position position="133"/>
    </location>
</feature>
<feature type="modified residue" description="N6-acetyllysine; alternate" evidence="9">
    <location>
        <position position="196"/>
    </location>
</feature>
<feature type="modified residue" description="N6-succinyllysine; alternate" evidence="10">
    <location>
        <position position="196"/>
    </location>
</feature>
<feature type="modified residue" description="N6-acetyllysine" evidence="9">
    <location>
        <position position="202"/>
    </location>
</feature>
<feature type="modified residue" description="Phosphoserine" evidence="2">
    <location>
        <position position="220"/>
    </location>
</feature>
<feature type="modified residue" description="N6-acetyllysine" evidence="9">
    <location>
        <position position="243"/>
    </location>
</feature>
<feature type="modified residue" description="N6-acetyllysine" evidence="9">
    <location>
        <position position="250"/>
    </location>
</feature>
<feature type="modified residue" description="N6-succinyllysine" evidence="10">
    <location>
        <position position="261"/>
    </location>
</feature>
<feature type="modified residue" description="N6-acetyllysine; alternate" evidence="9">
    <location>
        <position position="289"/>
    </location>
</feature>
<feature type="modified residue" description="N6-succinyllysine; alternate" evidence="10">
    <location>
        <position position="289"/>
    </location>
</feature>
<feature type="modified residue" description="N6-acetyllysine" evidence="9">
    <location>
        <position position="295"/>
    </location>
</feature>
<feature type="modified residue" description="N6-acetyllysine" evidence="9">
    <location>
        <position position="304"/>
    </location>
</feature>
<feature type="modified residue" description="N6-acetyllysine" evidence="9">
    <location>
        <position position="435"/>
    </location>
</feature>
<feature type="modified residue" description="N6-acetyllysine; alternate" evidence="9">
    <location>
        <position position="440"/>
    </location>
</feature>
<feature type="modified residue" description="N6-succinyllysine; alternate" evidence="10">
    <location>
        <position position="440"/>
    </location>
</feature>
<feature type="sequence conflict" description="In Ref. 1; AAC37681." evidence="8" ref="1">
    <original>EIA</original>
    <variation>GIG</variation>
    <location>
        <begin position="369"/>
        <end position="371"/>
    </location>
</feature>